<evidence type="ECO:0000250" key="1">
    <source>
        <dbReference type="UniProtKB" id="P00395"/>
    </source>
</evidence>
<evidence type="ECO:0000250" key="2">
    <source>
        <dbReference type="UniProtKB" id="P00396"/>
    </source>
</evidence>
<evidence type="ECO:0000250" key="3">
    <source>
        <dbReference type="UniProtKB" id="P00401"/>
    </source>
</evidence>
<evidence type="ECO:0000305" key="4"/>
<protein>
    <recommendedName>
        <fullName>Cytochrome c oxidase subunit 1</fullName>
        <ecNumber>7.1.1.9</ecNumber>
    </recommendedName>
    <alternativeName>
        <fullName>Cytochrome c oxidase polypeptide I</fullName>
    </alternativeName>
</protein>
<keyword id="KW-0106">Calcium</keyword>
<keyword id="KW-0186">Copper</keyword>
<keyword id="KW-0249">Electron transport</keyword>
<keyword id="KW-0349">Heme</keyword>
<keyword id="KW-0408">Iron</keyword>
<keyword id="KW-0460">Magnesium</keyword>
<keyword id="KW-0472">Membrane</keyword>
<keyword id="KW-0479">Metal-binding</keyword>
<keyword id="KW-0496">Mitochondrion</keyword>
<keyword id="KW-0999">Mitochondrion inner membrane</keyword>
<keyword id="KW-1185">Reference proteome</keyword>
<keyword id="KW-0679">Respiratory chain</keyword>
<keyword id="KW-0915">Sodium</keyword>
<keyword id="KW-1278">Translocase</keyword>
<keyword id="KW-0812">Transmembrane</keyword>
<keyword id="KW-1133">Transmembrane helix</keyword>
<keyword id="KW-0813">Transport</keyword>
<feature type="chain" id="PRO_0000232859" description="Cytochrome c oxidase subunit 1">
    <location>
        <begin position="1"/>
        <end position="515"/>
    </location>
</feature>
<feature type="topological domain" description="Mitochondrial matrix" evidence="2">
    <location>
        <begin position="1"/>
        <end position="11"/>
    </location>
</feature>
<feature type="transmembrane region" description="Helical; Name=I" evidence="2">
    <location>
        <begin position="12"/>
        <end position="40"/>
    </location>
</feature>
<feature type="topological domain" description="Mitochondrial intermembrane" evidence="2">
    <location>
        <begin position="41"/>
        <end position="50"/>
    </location>
</feature>
<feature type="transmembrane region" description="Helical; Name=II" evidence="2">
    <location>
        <begin position="51"/>
        <end position="86"/>
    </location>
</feature>
<feature type="topological domain" description="Mitochondrial matrix" evidence="2">
    <location>
        <begin position="87"/>
        <end position="94"/>
    </location>
</feature>
<feature type="transmembrane region" description="Helical; Name=III" evidence="2">
    <location>
        <begin position="95"/>
        <end position="117"/>
    </location>
</feature>
<feature type="topological domain" description="Mitochondrial intermembrane" evidence="2">
    <location>
        <begin position="118"/>
        <end position="140"/>
    </location>
</feature>
<feature type="transmembrane region" description="Helical; Name=IV" evidence="2">
    <location>
        <begin position="141"/>
        <end position="170"/>
    </location>
</feature>
<feature type="topological domain" description="Mitochondrial matrix" evidence="2">
    <location>
        <begin position="171"/>
        <end position="182"/>
    </location>
</feature>
<feature type="transmembrane region" description="Helical; Name=V" evidence="2">
    <location>
        <begin position="183"/>
        <end position="212"/>
    </location>
</feature>
<feature type="topological domain" description="Mitochondrial intermembrane" evidence="2">
    <location>
        <begin position="213"/>
        <end position="227"/>
    </location>
</feature>
<feature type="transmembrane region" description="Helical; Name=VI" evidence="2">
    <location>
        <begin position="228"/>
        <end position="261"/>
    </location>
</feature>
<feature type="topological domain" description="Mitochondrial matrix" evidence="2">
    <location>
        <begin position="262"/>
        <end position="269"/>
    </location>
</feature>
<feature type="transmembrane region" description="Helical; Name=VII" evidence="2">
    <location>
        <begin position="270"/>
        <end position="286"/>
    </location>
</feature>
<feature type="topological domain" description="Mitochondrial intermembrane" evidence="2">
    <location>
        <begin position="287"/>
        <end position="298"/>
    </location>
</feature>
<feature type="transmembrane region" description="Helical; Name=VIII" evidence="2">
    <location>
        <begin position="299"/>
        <end position="327"/>
    </location>
</feature>
<feature type="topological domain" description="Mitochondrial matrix" evidence="2">
    <location>
        <begin position="328"/>
        <end position="335"/>
    </location>
</feature>
<feature type="transmembrane region" description="Helical; Name=IX" evidence="2">
    <location>
        <begin position="336"/>
        <end position="357"/>
    </location>
</feature>
<feature type="topological domain" description="Mitochondrial intermembrane" evidence="2">
    <location>
        <begin position="358"/>
        <end position="370"/>
    </location>
</feature>
<feature type="transmembrane region" description="Helical; Name=X" evidence="2">
    <location>
        <begin position="371"/>
        <end position="400"/>
    </location>
</feature>
<feature type="topological domain" description="Mitochondrial matrix" evidence="2">
    <location>
        <begin position="401"/>
        <end position="406"/>
    </location>
</feature>
<feature type="transmembrane region" description="Helical; Name=XI" evidence="2">
    <location>
        <begin position="407"/>
        <end position="433"/>
    </location>
</feature>
<feature type="topological domain" description="Mitochondrial intermembrane" evidence="2">
    <location>
        <begin position="434"/>
        <end position="446"/>
    </location>
</feature>
<feature type="transmembrane region" description="Helical; Name=XII" evidence="2">
    <location>
        <begin position="447"/>
        <end position="478"/>
    </location>
</feature>
<feature type="topological domain" description="Mitochondrial matrix" evidence="2">
    <location>
        <begin position="479"/>
        <end position="515"/>
    </location>
</feature>
<feature type="binding site" evidence="2">
    <location>
        <position position="40"/>
    </location>
    <ligand>
        <name>Na(+)</name>
        <dbReference type="ChEBI" id="CHEBI:29101"/>
    </ligand>
</feature>
<feature type="binding site" evidence="2">
    <location>
        <position position="45"/>
    </location>
    <ligand>
        <name>Na(+)</name>
        <dbReference type="ChEBI" id="CHEBI:29101"/>
    </ligand>
</feature>
<feature type="binding site" description="axial binding residue" evidence="2">
    <location>
        <position position="61"/>
    </location>
    <ligand>
        <name>Fe(II)-heme a</name>
        <dbReference type="ChEBI" id="CHEBI:61715"/>
        <note>low-spin</note>
    </ligand>
    <ligandPart>
        <name>Fe</name>
        <dbReference type="ChEBI" id="CHEBI:18248"/>
    </ligandPart>
</feature>
<feature type="binding site" evidence="2">
    <location>
        <position position="240"/>
    </location>
    <ligand>
        <name>Cu cation</name>
        <dbReference type="ChEBI" id="CHEBI:23378"/>
        <label>B</label>
    </ligand>
</feature>
<feature type="binding site" evidence="2">
    <location>
        <position position="244"/>
    </location>
    <ligand>
        <name>O2</name>
        <dbReference type="ChEBI" id="CHEBI:15379"/>
    </ligand>
</feature>
<feature type="binding site" evidence="2">
    <location>
        <position position="290"/>
    </location>
    <ligand>
        <name>Cu cation</name>
        <dbReference type="ChEBI" id="CHEBI:23378"/>
        <label>B</label>
    </ligand>
</feature>
<feature type="binding site" evidence="2">
    <location>
        <position position="291"/>
    </location>
    <ligand>
        <name>Cu cation</name>
        <dbReference type="ChEBI" id="CHEBI:23378"/>
        <label>B</label>
    </ligand>
</feature>
<feature type="binding site" evidence="2">
    <location>
        <position position="368"/>
    </location>
    <ligand>
        <name>Mg(2+)</name>
        <dbReference type="ChEBI" id="CHEBI:18420"/>
        <note>ligand shared with MT-CO2</note>
    </ligand>
</feature>
<feature type="binding site" evidence="2">
    <location>
        <position position="369"/>
    </location>
    <ligand>
        <name>Mg(2+)</name>
        <dbReference type="ChEBI" id="CHEBI:18420"/>
        <note>ligand shared with MT-CO2</note>
    </ligand>
</feature>
<feature type="binding site" description="axial binding residue" evidence="2">
    <location>
        <position position="376"/>
    </location>
    <ligand>
        <name>heme a3</name>
        <dbReference type="ChEBI" id="CHEBI:83282"/>
        <note>high-spin</note>
    </ligand>
    <ligandPart>
        <name>Fe</name>
        <dbReference type="ChEBI" id="CHEBI:18248"/>
    </ligandPart>
</feature>
<feature type="binding site" description="axial binding residue" evidence="2">
    <location>
        <position position="378"/>
    </location>
    <ligand>
        <name>Fe(II)-heme a</name>
        <dbReference type="ChEBI" id="CHEBI:61715"/>
        <note>low-spin</note>
    </ligand>
    <ligandPart>
        <name>Fe</name>
        <dbReference type="ChEBI" id="CHEBI:18248"/>
    </ligandPart>
</feature>
<feature type="binding site" evidence="2">
    <location>
        <position position="441"/>
    </location>
    <ligand>
        <name>Na(+)</name>
        <dbReference type="ChEBI" id="CHEBI:29101"/>
    </ligand>
</feature>
<feature type="cross-link" description="1'-histidyl-3'-tyrosine (His-Tyr)" evidence="2">
    <location>
        <begin position="240"/>
        <end position="244"/>
    </location>
</feature>
<accession>Q9TA27</accession>
<gene>
    <name type="primary">MT-CO1</name>
    <name type="synonym">COI</name>
    <name type="synonym">COXI</name>
    <name type="synonym">MTCO1</name>
</gene>
<comment type="function">
    <text evidence="3">Component of the cytochrome c oxidase, the last enzyme in the mitochondrial electron transport chain which drives oxidative phosphorylation. The respiratory chain contains 3 multisubunit complexes succinate dehydrogenase (complex II, CII), ubiquinol-cytochrome c oxidoreductase (cytochrome b-c1 complex, complex III, CIII) and cytochrome c oxidase (complex IV, CIV), that cooperate to transfer electrons derived from NADH and succinate to molecular oxygen, creating an electrochemical gradient over the inner membrane that drives transmembrane transport and the ATP synthase. Cytochrome c oxidase is the component of the respiratory chain that catalyzes the reduction of oxygen to water. Electrons originating from reduced cytochrome c in the intermembrane space (IMS) are transferred via the dinuclear copper A center (CU(A)) of subunit 2 and heme A of subunit 1 to the active site in subunit 1, a binuclear center (BNC) formed by heme A3 and copper B (CU(B)). The BNC reduces molecular oxygen to 2 water molecules using 4 electrons from cytochrome c in the IMS and 4 protons from the mitochondrial matrix.</text>
</comment>
<comment type="catalytic activity">
    <reaction evidence="3">
        <text>4 Fe(II)-[cytochrome c] + O2 + 8 H(+)(in) = 4 Fe(III)-[cytochrome c] + 2 H2O + 4 H(+)(out)</text>
        <dbReference type="Rhea" id="RHEA:11436"/>
        <dbReference type="Rhea" id="RHEA-COMP:10350"/>
        <dbReference type="Rhea" id="RHEA-COMP:14399"/>
        <dbReference type="ChEBI" id="CHEBI:15377"/>
        <dbReference type="ChEBI" id="CHEBI:15378"/>
        <dbReference type="ChEBI" id="CHEBI:15379"/>
        <dbReference type="ChEBI" id="CHEBI:29033"/>
        <dbReference type="ChEBI" id="CHEBI:29034"/>
        <dbReference type="EC" id="7.1.1.9"/>
    </reaction>
    <physiologicalReaction direction="left-to-right" evidence="3">
        <dbReference type="Rhea" id="RHEA:11437"/>
    </physiologicalReaction>
</comment>
<comment type="cofactor">
    <cofactor evidence="2">
        <name>heme</name>
        <dbReference type="ChEBI" id="CHEBI:30413"/>
    </cofactor>
    <text evidence="2">Binds 2 heme A groups non-covalently per subunit.</text>
</comment>
<comment type="cofactor">
    <cofactor evidence="2">
        <name>Cu cation</name>
        <dbReference type="ChEBI" id="CHEBI:23378"/>
    </cofactor>
    <text evidence="2">Binds a copper B center.</text>
</comment>
<comment type="pathway">
    <text evidence="3">Energy metabolism; oxidative phosphorylation.</text>
</comment>
<comment type="subunit">
    <text evidence="1 2">Component of the cytochrome c oxidase (complex IV, CIV), a multisubunit enzyme composed of 14 subunits. The complex is composed of a catalytic core of 3 subunits MT-CO1, MT-CO2 and MT-CO3, encoded in the mitochondrial DNA, and 11 supernumerary subunits COX4I, COX5A, COX5B, COX6A, COX6B, COX6C, COX7A, COX7B, COX7C, COX8 and NDUFA4, which are encoded in the nuclear genome. The complex exists as a monomer or a dimer and forms supercomplexes (SCs) in the inner mitochondrial membrane with NADH-ubiquinone oxidoreductase (complex I, CI) and ubiquinol-cytochrome c oxidoreductase (cytochrome b-c1 complex, complex III, CIII), resulting in different assemblies (supercomplex SCI(1)III(2)IV(1) and megacomplex MCI(2)III(2)IV(2)) (By similarity). As a newly synthesized protein, rapidly incorporates into a multi-subunit assembly intermediate in the inner membrane, called MITRAC (mitochondrial translation regulation assembly intermediate of cytochrome c oxidase) complex, whose core components are COA3/MITRAC12 and COX14. Within the MITRAC complex, interacts with COA3 and with SMIM20/MITRAC7; the interaction with SMIM20 stabilizes the newly synthesized MT-CO1 and prevents its premature turnover. Interacts with TMEM177 in a COX20-dependent manner (By similarity).</text>
</comment>
<comment type="subcellular location">
    <subcellularLocation>
        <location evidence="2">Mitochondrion inner membrane</location>
        <topology evidence="2">Multi-pass membrane protein</topology>
    </subcellularLocation>
</comment>
<comment type="similarity">
    <text evidence="4">Belongs to the heme-copper respiratory oxidase family.</text>
</comment>
<sequence length="515" mass="57101">MFANRWLYSTNHKDIGTLYLLFGAWAGMVGTAFSILIRAELGQPGSLLGDDQIYNVIVTAHAFVMIFFMVMPIMIGGFGNWLIPLMIGAPDMAFPRMNNMSFWLLPPSFLLLLASSMVEAGAGTGWTVYPPLAGNLAHAGASVDLTIFSLHLAGVSSILSAINFITTIINMKPPAMSQYHMPLFVWSILITAVLLLLSLPVLAAGITMLLTDRNLNTTFFDPAGGGDPILYQHLFWFFGHPEVYILILPGFGMVSHIVTYYSGKKEPFGYMGMVWAMMSIGFLGFIVWAHHMFTVGMDVDTRAYFTSATMIIAIPTGVKVFSWLATLHGGNIKWSPAMMWALGFIFLFTIGGLTGIVLANSSLDIVLHDTYYVVAHFHYVLSMGAVFAIMGGFIHWFPLFSGYTLNYTWAKIQFLVMFIGVNLTFFPQHFLGLSGMPRRYSDYPDAYTAWNTASSMGSFISLVAVILMVFMIWEAFASKREVSVMELTTTNVEWLNGCPPPHHTFEEPAYVKSNS</sequence>
<dbReference type="EC" id="7.1.1.9"/>
<dbReference type="EMBL" id="AJ224821">
    <property type="protein sequence ID" value="CAA12140.1"/>
    <property type="molecule type" value="Genomic_DNA"/>
</dbReference>
<dbReference type="EMBL" id="DQ316069">
    <property type="protein sequence ID" value="ABC17906.1"/>
    <property type="molecule type" value="Genomic_DNA"/>
</dbReference>
<dbReference type="PIR" id="T45552">
    <property type="entry name" value="T45552"/>
</dbReference>
<dbReference type="SMR" id="Q9TA27"/>
<dbReference type="FunCoup" id="Q9TA27">
    <property type="interactions" value="37"/>
</dbReference>
<dbReference type="STRING" id="9785.ENSLAFP00000029493"/>
<dbReference type="Ensembl" id="ENSLAFT00000038050.1">
    <property type="protein sequence ID" value="ENSLAFP00000029493.1"/>
    <property type="gene ID" value="ENSLAFG00000033284.1"/>
</dbReference>
<dbReference type="KEGG" id="lav:808791"/>
<dbReference type="CTD" id="4512"/>
<dbReference type="eggNOG" id="KOG4769">
    <property type="taxonomic scope" value="Eukaryota"/>
</dbReference>
<dbReference type="GeneTree" id="ENSGT00390000001518"/>
<dbReference type="HOGENOM" id="CLU_011899_7_3_1"/>
<dbReference type="InParanoid" id="Q9TA27"/>
<dbReference type="OMA" id="WAMMSIG"/>
<dbReference type="OrthoDB" id="10002679at2759"/>
<dbReference type="TreeFam" id="TF353096"/>
<dbReference type="UniPathway" id="UPA00705"/>
<dbReference type="Proteomes" id="UP000007646">
    <property type="component" value="Unassembled WGS sequence"/>
</dbReference>
<dbReference type="GO" id="GO:0005743">
    <property type="term" value="C:mitochondrial inner membrane"/>
    <property type="evidence" value="ECO:0007669"/>
    <property type="project" value="UniProtKB-SubCell"/>
</dbReference>
<dbReference type="GO" id="GO:0045277">
    <property type="term" value="C:respiratory chain complex IV"/>
    <property type="evidence" value="ECO:0000250"/>
    <property type="project" value="UniProtKB"/>
</dbReference>
<dbReference type="GO" id="GO:0004129">
    <property type="term" value="F:cytochrome-c oxidase activity"/>
    <property type="evidence" value="ECO:0007669"/>
    <property type="project" value="UniProtKB-EC"/>
</dbReference>
<dbReference type="GO" id="GO:0020037">
    <property type="term" value="F:heme binding"/>
    <property type="evidence" value="ECO:0007669"/>
    <property type="project" value="InterPro"/>
</dbReference>
<dbReference type="GO" id="GO:0046872">
    <property type="term" value="F:metal ion binding"/>
    <property type="evidence" value="ECO:0007669"/>
    <property type="project" value="UniProtKB-KW"/>
</dbReference>
<dbReference type="GO" id="GO:0015990">
    <property type="term" value="P:electron transport coupled proton transport"/>
    <property type="evidence" value="ECO:0007669"/>
    <property type="project" value="TreeGrafter"/>
</dbReference>
<dbReference type="GO" id="GO:0006123">
    <property type="term" value="P:mitochondrial electron transport, cytochrome c to oxygen"/>
    <property type="evidence" value="ECO:0007669"/>
    <property type="project" value="TreeGrafter"/>
</dbReference>
<dbReference type="CDD" id="cd01663">
    <property type="entry name" value="Cyt_c_Oxidase_I"/>
    <property type="match status" value="1"/>
</dbReference>
<dbReference type="FunFam" id="1.20.210.10:FF:000001">
    <property type="entry name" value="Cytochrome c oxidase subunit 1"/>
    <property type="match status" value="1"/>
</dbReference>
<dbReference type="Gene3D" id="1.20.210.10">
    <property type="entry name" value="Cytochrome c oxidase-like, subunit I domain"/>
    <property type="match status" value="1"/>
</dbReference>
<dbReference type="InterPro" id="IPR023616">
    <property type="entry name" value="Cyt_c_oxase-like_su1_dom"/>
</dbReference>
<dbReference type="InterPro" id="IPR036927">
    <property type="entry name" value="Cyt_c_oxase-like_su1_sf"/>
</dbReference>
<dbReference type="InterPro" id="IPR000883">
    <property type="entry name" value="Cyt_C_Oxase_1"/>
</dbReference>
<dbReference type="InterPro" id="IPR023615">
    <property type="entry name" value="Cyt_c_Oxase_su1_BS"/>
</dbReference>
<dbReference type="InterPro" id="IPR033944">
    <property type="entry name" value="Cyt_c_oxase_su1_dom"/>
</dbReference>
<dbReference type="PANTHER" id="PTHR10422">
    <property type="entry name" value="CYTOCHROME C OXIDASE SUBUNIT 1"/>
    <property type="match status" value="1"/>
</dbReference>
<dbReference type="PANTHER" id="PTHR10422:SF18">
    <property type="entry name" value="CYTOCHROME C OXIDASE SUBUNIT 1"/>
    <property type="match status" value="1"/>
</dbReference>
<dbReference type="Pfam" id="PF00115">
    <property type="entry name" value="COX1"/>
    <property type="match status" value="1"/>
</dbReference>
<dbReference type="PRINTS" id="PR01165">
    <property type="entry name" value="CYCOXIDASEI"/>
</dbReference>
<dbReference type="SUPFAM" id="SSF81442">
    <property type="entry name" value="Cytochrome c oxidase subunit I-like"/>
    <property type="match status" value="1"/>
</dbReference>
<dbReference type="PROSITE" id="PS50855">
    <property type="entry name" value="COX1"/>
    <property type="match status" value="1"/>
</dbReference>
<dbReference type="PROSITE" id="PS00077">
    <property type="entry name" value="COX1_CUB"/>
    <property type="match status" value="1"/>
</dbReference>
<proteinExistence type="inferred from homology"/>
<name>COX1_LOXAF</name>
<organism>
    <name type="scientific">Loxodonta africana</name>
    <name type="common">African elephant</name>
    <dbReference type="NCBI Taxonomy" id="9785"/>
    <lineage>
        <taxon>Eukaryota</taxon>
        <taxon>Metazoa</taxon>
        <taxon>Chordata</taxon>
        <taxon>Craniata</taxon>
        <taxon>Vertebrata</taxon>
        <taxon>Euteleostomi</taxon>
        <taxon>Mammalia</taxon>
        <taxon>Eutheria</taxon>
        <taxon>Afrotheria</taxon>
        <taxon>Proboscidea</taxon>
        <taxon>Elephantidae</taxon>
        <taxon>Loxodonta</taxon>
    </lineage>
</organism>
<reference key="1">
    <citation type="journal article" date="2000" name="Zoology">
        <title>The complete mitochondrial genome sequence of the African elephant (Loxodonta africana), phylogenetic relationships of Proboscidea to other mammals and D-loop heteroplasmy.</title>
        <authorList>
            <person name="Hauf J."/>
            <person name="Waddell P.J."/>
            <person name="Chalwatzis N."/>
            <person name="Joger U."/>
            <person name="Zimmermann F.K."/>
        </authorList>
    </citation>
    <scope>NUCLEOTIDE SEQUENCE [GENOMIC DNA]</scope>
    <source>
        <tissue>Blood</tissue>
    </source>
</reference>
<reference key="2">
    <citation type="journal article" date="2006" name="PLoS Biol.">
        <title>Complete mitochondrial genome and phylogeny of Pleistocene mammoth Mammuthus primigenius.</title>
        <authorList>
            <person name="Rogaev E.I."/>
            <person name="Moliaka Y.K."/>
            <person name="Malyarchuk B.A."/>
            <person name="Kondrashov F.A."/>
            <person name="Derenko M.V."/>
            <person name="Chumakov I."/>
            <person name="Grigorenko A.P."/>
        </authorList>
    </citation>
    <scope>NUCLEOTIDE SEQUENCE [GENOMIC DNA]</scope>
    <source>
        <tissue>Blood</tissue>
    </source>
</reference>
<geneLocation type="mitochondrion"/>